<reference key="1">
    <citation type="journal article" date="2010" name="Genome Biol. Evol.">
        <title>Continuing evolution of Burkholderia mallei through genome reduction and large-scale rearrangements.</title>
        <authorList>
            <person name="Losada L."/>
            <person name="Ronning C.M."/>
            <person name="DeShazer D."/>
            <person name="Woods D."/>
            <person name="Fedorova N."/>
            <person name="Kim H.S."/>
            <person name="Shabalina S.A."/>
            <person name="Pearson T.R."/>
            <person name="Brinkac L."/>
            <person name="Tan P."/>
            <person name="Nandi T."/>
            <person name="Crabtree J."/>
            <person name="Badger J."/>
            <person name="Beckstrom-Sternberg S."/>
            <person name="Saqib M."/>
            <person name="Schutzer S.E."/>
            <person name="Keim P."/>
            <person name="Nierman W.C."/>
        </authorList>
    </citation>
    <scope>NUCLEOTIDE SEQUENCE [LARGE SCALE GENOMIC DNA]</scope>
    <source>
        <strain>1106a</strain>
    </source>
</reference>
<dbReference type="EC" id="2.7.7.6" evidence="1"/>
<dbReference type="EMBL" id="CP000572">
    <property type="protein sequence ID" value="ABN90615.1"/>
    <property type="molecule type" value="Genomic_DNA"/>
</dbReference>
<dbReference type="RefSeq" id="WP_004521902.1">
    <property type="nucleotide sequence ID" value="NC_009076.1"/>
</dbReference>
<dbReference type="SMR" id="A3P0C4"/>
<dbReference type="GeneID" id="93061839"/>
<dbReference type="KEGG" id="bpl:BURPS1106A_3815"/>
<dbReference type="HOGENOM" id="CLU_000524_3_1_4"/>
<dbReference type="Proteomes" id="UP000006738">
    <property type="component" value="Chromosome I"/>
</dbReference>
<dbReference type="GO" id="GO:0000428">
    <property type="term" value="C:DNA-directed RNA polymerase complex"/>
    <property type="evidence" value="ECO:0007669"/>
    <property type="project" value="UniProtKB-KW"/>
</dbReference>
<dbReference type="GO" id="GO:0003677">
    <property type="term" value="F:DNA binding"/>
    <property type="evidence" value="ECO:0007669"/>
    <property type="project" value="UniProtKB-UniRule"/>
</dbReference>
<dbReference type="GO" id="GO:0003899">
    <property type="term" value="F:DNA-directed RNA polymerase activity"/>
    <property type="evidence" value="ECO:0007669"/>
    <property type="project" value="UniProtKB-UniRule"/>
</dbReference>
<dbReference type="GO" id="GO:0000287">
    <property type="term" value="F:magnesium ion binding"/>
    <property type="evidence" value="ECO:0007669"/>
    <property type="project" value="UniProtKB-UniRule"/>
</dbReference>
<dbReference type="GO" id="GO:0008270">
    <property type="term" value="F:zinc ion binding"/>
    <property type="evidence" value="ECO:0007669"/>
    <property type="project" value="UniProtKB-UniRule"/>
</dbReference>
<dbReference type="GO" id="GO:0006351">
    <property type="term" value="P:DNA-templated transcription"/>
    <property type="evidence" value="ECO:0007669"/>
    <property type="project" value="UniProtKB-UniRule"/>
</dbReference>
<dbReference type="CDD" id="cd02655">
    <property type="entry name" value="RNAP_beta'_C"/>
    <property type="match status" value="1"/>
</dbReference>
<dbReference type="CDD" id="cd01609">
    <property type="entry name" value="RNAP_beta'_N"/>
    <property type="match status" value="1"/>
</dbReference>
<dbReference type="FunFam" id="1.10.132.30:FF:000003">
    <property type="entry name" value="DNA-directed RNA polymerase subunit beta"/>
    <property type="match status" value="1"/>
</dbReference>
<dbReference type="FunFam" id="1.10.150.390:FF:000002">
    <property type="entry name" value="DNA-directed RNA polymerase subunit beta"/>
    <property type="match status" value="1"/>
</dbReference>
<dbReference type="FunFam" id="4.10.860.120:FF:000001">
    <property type="entry name" value="DNA-directed RNA polymerase subunit beta"/>
    <property type="match status" value="1"/>
</dbReference>
<dbReference type="Gene3D" id="1.10.132.30">
    <property type="match status" value="1"/>
</dbReference>
<dbReference type="Gene3D" id="1.10.150.390">
    <property type="match status" value="1"/>
</dbReference>
<dbReference type="Gene3D" id="1.10.1790.20">
    <property type="match status" value="1"/>
</dbReference>
<dbReference type="Gene3D" id="1.10.40.90">
    <property type="match status" value="1"/>
</dbReference>
<dbReference type="Gene3D" id="2.40.40.20">
    <property type="match status" value="1"/>
</dbReference>
<dbReference type="Gene3D" id="2.40.50.100">
    <property type="match status" value="3"/>
</dbReference>
<dbReference type="Gene3D" id="4.10.860.120">
    <property type="entry name" value="RNA polymerase II, clamp domain"/>
    <property type="match status" value="1"/>
</dbReference>
<dbReference type="Gene3D" id="1.10.274.100">
    <property type="entry name" value="RNA polymerase Rpb1, domain 3"/>
    <property type="match status" value="1"/>
</dbReference>
<dbReference type="HAMAP" id="MF_01322">
    <property type="entry name" value="RNApol_bact_RpoC"/>
    <property type="match status" value="1"/>
</dbReference>
<dbReference type="InterPro" id="IPR045867">
    <property type="entry name" value="DNA-dir_RpoC_beta_prime"/>
</dbReference>
<dbReference type="InterPro" id="IPR012754">
    <property type="entry name" value="DNA-dir_RpoC_beta_prime_bact"/>
</dbReference>
<dbReference type="InterPro" id="IPR000722">
    <property type="entry name" value="RNA_pol_asu"/>
</dbReference>
<dbReference type="InterPro" id="IPR006592">
    <property type="entry name" value="RNA_pol_N"/>
</dbReference>
<dbReference type="InterPro" id="IPR007080">
    <property type="entry name" value="RNA_pol_Rpb1_1"/>
</dbReference>
<dbReference type="InterPro" id="IPR007066">
    <property type="entry name" value="RNA_pol_Rpb1_3"/>
</dbReference>
<dbReference type="InterPro" id="IPR042102">
    <property type="entry name" value="RNA_pol_Rpb1_3_sf"/>
</dbReference>
<dbReference type="InterPro" id="IPR007083">
    <property type="entry name" value="RNA_pol_Rpb1_4"/>
</dbReference>
<dbReference type="InterPro" id="IPR007081">
    <property type="entry name" value="RNA_pol_Rpb1_5"/>
</dbReference>
<dbReference type="InterPro" id="IPR044893">
    <property type="entry name" value="RNA_pol_Rpb1_clamp_domain"/>
</dbReference>
<dbReference type="InterPro" id="IPR038120">
    <property type="entry name" value="Rpb1_funnel_sf"/>
</dbReference>
<dbReference type="NCBIfam" id="TIGR02386">
    <property type="entry name" value="rpoC_TIGR"/>
    <property type="match status" value="1"/>
</dbReference>
<dbReference type="PANTHER" id="PTHR19376">
    <property type="entry name" value="DNA-DIRECTED RNA POLYMERASE"/>
    <property type="match status" value="1"/>
</dbReference>
<dbReference type="PANTHER" id="PTHR19376:SF54">
    <property type="entry name" value="DNA-DIRECTED RNA POLYMERASE SUBUNIT BETA"/>
    <property type="match status" value="1"/>
</dbReference>
<dbReference type="Pfam" id="PF04997">
    <property type="entry name" value="RNA_pol_Rpb1_1"/>
    <property type="match status" value="1"/>
</dbReference>
<dbReference type="Pfam" id="PF00623">
    <property type="entry name" value="RNA_pol_Rpb1_2"/>
    <property type="match status" value="2"/>
</dbReference>
<dbReference type="Pfam" id="PF04983">
    <property type="entry name" value="RNA_pol_Rpb1_3"/>
    <property type="match status" value="1"/>
</dbReference>
<dbReference type="Pfam" id="PF05000">
    <property type="entry name" value="RNA_pol_Rpb1_4"/>
    <property type="match status" value="1"/>
</dbReference>
<dbReference type="Pfam" id="PF04998">
    <property type="entry name" value="RNA_pol_Rpb1_5"/>
    <property type="match status" value="1"/>
</dbReference>
<dbReference type="SMART" id="SM00663">
    <property type="entry name" value="RPOLA_N"/>
    <property type="match status" value="1"/>
</dbReference>
<dbReference type="SUPFAM" id="SSF64484">
    <property type="entry name" value="beta and beta-prime subunits of DNA dependent RNA-polymerase"/>
    <property type="match status" value="1"/>
</dbReference>
<protein>
    <recommendedName>
        <fullName evidence="1">DNA-directed RNA polymerase subunit beta'</fullName>
        <shortName evidence="1">RNAP subunit beta'</shortName>
        <ecNumber evidence="1">2.7.7.6</ecNumber>
    </recommendedName>
    <alternativeName>
        <fullName evidence="1">RNA polymerase subunit beta'</fullName>
    </alternativeName>
    <alternativeName>
        <fullName evidence="1">Transcriptase subunit beta'</fullName>
    </alternativeName>
</protein>
<comment type="function">
    <text evidence="1">DNA-dependent RNA polymerase catalyzes the transcription of DNA into RNA using the four ribonucleoside triphosphates as substrates.</text>
</comment>
<comment type="catalytic activity">
    <reaction evidence="1">
        <text>RNA(n) + a ribonucleoside 5'-triphosphate = RNA(n+1) + diphosphate</text>
        <dbReference type="Rhea" id="RHEA:21248"/>
        <dbReference type="Rhea" id="RHEA-COMP:14527"/>
        <dbReference type="Rhea" id="RHEA-COMP:17342"/>
        <dbReference type="ChEBI" id="CHEBI:33019"/>
        <dbReference type="ChEBI" id="CHEBI:61557"/>
        <dbReference type="ChEBI" id="CHEBI:140395"/>
        <dbReference type="EC" id="2.7.7.6"/>
    </reaction>
</comment>
<comment type="cofactor">
    <cofactor evidence="1">
        <name>Mg(2+)</name>
        <dbReference type="ChEBI" id="CHEBI:18420"/>
    </cofactor>
    <text evidence="1">Binds 1 Mg(2+) ion per subunit.</text>
</comment>
<comment type="cofactor">
    <cofactor evidence="1">
        <name>Zn(2+)</name>
        <dbReference type="ChEBI" id="CHEBI:29105"/>
    </cofactor>
    <text evidence="1">Binds 2 Zn(2+) ions per subunit.</text>
</comment>
<comment type="subunit">
    <text evidence="1">The RNAP catalytic core consists of 2 alpha, 1 beta, 1 beta' and 1 omega subunit. When a sigma factor is associated with the core the holoenzyme is formed, which can initiate transcription.</text>
</comment>
<comment type="similarity">
    <text evidence="1">Belongs to the RNA polymerase beta' chain family.</text>
</comment>
<evidence type="ECO:0000255" key="1">
    <source>
        <dbReference type="HAMAP-Rule" id="MF_01322"/>
    </source>
</evidence>
<evidence type="ECO:0000256" key="2">
    <source>
        <dbReference type="SAM" id="MobiDB-lite"/>
    </source>
</evidence>
<accession>A3P0C4</accession>
<organism>
    <name type="scientific">Burkholderia pseudomallei (strain 1106a)</name>
    <dbReference type="NCBI Taxonomy" id="357348"/>
    <lineage>
        <taxon>Bacteria</taxon>
        <taxon>Pseudomonadati</taxon>
        <taxon>Pseudomonadota</taxon>
        <taxon>Betaproteobacteria</taxon>
        <taxon>Burkholderiales</taxon>
        <taxon>Burkholderiaceae</taxon>
        <taxon>Burkholderia</taxon>
        <taxon>pseudomallei group</taxon>
    </lineage>
</organism>
<name>RPOC_BURP0</name>
<keyword id="KW-0240">DNA-directed RNA polymerase</keyword>
<keyword id="KW-0460">Magnesium</keyword>
<keyword id="KW-0479">Metal-binding</keyword>
<keyword id="KW-0548">Nucleotidyltransferase</keyword>
<keyword id="KW-0804">Transcription</keyword>
<keyword id="KW-0808">Transferase</keyword>
<keyword id="KW-0862">Zinc</keyword>
<feature type="chain" id="PRO_0000353315" description="DNA-directed RNA polymerase subunit beta'">
    <location>
        <begin position="1"/>
        <end position="1412"/>
    </location>
</feature>
<feature type="region of interest" description="Disordered" evidence="2">
    <location>
        <begin position="1393"/>
        <end position="1412"/>
    </location>
</feature>
<feature type="binding site" evidence="1">
    <location>
        <position position="70"/>
    </location>
    <ligand>
        <name>Zn(2+)</name>
        <dbReference type="ChEBI" id="CHEBI:29105"/>
        <label>1</label>
    </ligand>
</feature>
<feature type="binding site" evidence="1">
    <location>
        <position position="72"/>
    </location>
    <ligand>
        <name>Zn(2+)</name>
        <dbReference type="ChEBI" id="CHEBI:29105"/>
        <label>1</label>
    </ligand>
</feature>
<feature type="binding site" evidence="1">
    <location>
        <position position="85"/>
    </location>
    <ligand>
        <name>Zn(2+)</name>
        <dbReference type="ChEBI" id="CHEBI:29105"/>
        <label>1</label>
    </ligand>
</feature>
<feature type="binding site" evidence="1">
    <location>
        <position position="88"/>
    </location>
    <ligand>
        <name>Zn(2+)</name>
        <dbReference type="ChEBI" id="CHEBI:29105"/>
        <label>1</label>
    </ligand>
</feature>
<feature type="binding site" evidence="1">
    <location>
        <position position="460"/>
    </location>
    <ligand>
        <name>Mg(2+)</name>
        <dbReference type="ChEBI" id="CHEBI:18420"/>
    </ligand>
</feature>
<feature type="binding site" evidence="1">
    <location>
        <position position="462"/>
    </location>
    <ligand>
        <name>Mg(2+)</name>
        <dbReference type="ChEBI" id="CHEBI:18420"/>
    </ligand>
</feature>
<feature type="binding site" evidence="1">
    <location>
        <position position="464"/>
    </location>
    <ligand>
        <name>Mg(2+)</name>
        <dbReference type="ChEBI" id="CHEBI:18420"/>
    </ligand>
</feature>
<feature type="binding site" evidence="1">
    <location>
        <position position="819"/>
    </location>
    <ligand>
        <name>Zn(2+)</name>
        <dbReference type="ChEBI" id="CHEBI:29105"/>
        <label>2</label>
    </ligand>
</feature>
<feature type="binding site" evidence="1">
    <location>
        <position position="893"/>
    </location>
    <ligand>
        <name>Zn(2+)</name>
        <dbReference type="ChEBI" id="CHEBI:29105"/>
        <label>2</label>
    </ligand>
</feature>
<feature type="binding site" evidence="1">
    <location>
        <position position="900"/>
    </location>
    <ligand>
        <name>Zn(2+)</name>
        <dbReference type="ChEBI" id="CHEBI:29105"/>
        <label>2</label>
    </ligand>
</feature>
<feature type="binding site" evidence="1">
    <location>
        <position position="903"/>
    </location>
    <ligand>
        <name>Zn(2+)</name>
        <dbReference type="ChEBI" id="CHEBI:29105"/>
        <label>2</label>
    </ligand>
</feature>
<sequence length="1412" mass="155992">MKALLDLFKQVQQEEIFDAIKIGLASPDKIRSWSFGEVKKPETINYRTFKPERDGLFCAKIFGPIKDYECLCGKYKRLKHRGVICEKCGVEVTLAKVRRERMGHIELASPVAHIWFLKSLPSRLGMVLDMTLRDIERVLYFEAYVVIDPGMTPLKARQIMTEEDYYNKVEEYGDEFRAEMGAEGVRELLRSINIDEQVETLRTELKNTGSEAKIKKYAKRLKVLEAFQRSGIKPDWMILEVLPVLPPELRPLVPLDGGRFATSDLNDLYRRVINRNNRLKRLLELKAPEIIVRNEKRMLQEAVDSLLDNGRRGKAMTGANKRPLKSLADMIKGKGGRFRQNLLGKRVDYSGRSVIVVGPTLKLHQCGLPKLMALELFKPFIFNKLEVMGVATTIKAAKKEVENQTPVVWDILEEVIREHPVMLNRAPTLHRLGIQAFEPVLIEGKAIQLHPLVCAAFNADFDGDQMAVHVPLSLEAQMEARTLMLASNNVLFPANGDPSIVPSQDIVLGLYYATREAINGKGEGLSFTGVSEVIRAYENKEVELASRVNVRITEMVRNEDTSEGAPQFVPKISLYATTVGRAILSEILPPGLPFSVLNKPLKKKEISRLINTAFRKCGLRATVVFADQLMQSGFRLATRAGISICVDDMLVPTQKETIVGDAAKKVKEYDRQYMSGLVTAQERYNNVVDIWSATSEAVGKAMMEQLSTEPVIDRDGNETRQESFNSIYMMADSGARGSAVQIRQLAGMRGLMAKPDGSIIETPITANFREGLNVLQYFISTHGARKGLADTALKTANSGYLTRRLVDVTQDLVVVEDDCGTSNGVAMKALVEGGEVVEALRDRILGRVAASDVVNPETQETLYEAGALLDETAVEDIERLGIDEVRVRTALTCETRYGLCASCYGRDLGRGSLVNVGEAVGVIAAQSIGEPGTQLTMRTFHIGGAASRAAVASSVEAKSNGTVRFTASMRYVTNAKGEQIVISRSGEALITDDIGRERERHKIPYGATLLQLDGAAIKAGTQLATWDPLTRPIITEYGGTVKFENVEEGVTVAKQIDDVTGLSTLVVIDVKRRGSQAAKSVRPQVKLLDANGDEVKIPGTEHAVQIGFQVGALITVKDGQQVQVGEVLARIPTESQKTRDITGGLPRVAELFEARSPKDAGILAEVTGTVSFGKDTKGKQRLVITDLEGNQHEFLIAKEKQVLVHDGQVVNKGEMIVDGPADPHDILRLQGIEALSRYIVDEVQDVYRLQGVKINDKHIEVIVRQMLRRVQIVDNGDTRFIPGEQVERSDMLDENDRMIAEDKRPATYDNILLGITKASLSTDSFISAASFQETTRVLTEAAIMGKRDDLRGLKENVIVGRLIPAGTGLAFHKARKAKEQSDRERFDQIAAEEAFEFGTPSAPAEEPQHPAE</sequence>
<proteinExistence type="inferred from homology"/>
<gene>
    <name evidence="1" type="primary">rpoC</name>
    <name type="ordered locus">BURPS1106A_3815</name>
</gene>